<name>NPR4_ARATH</name>
<organism>
    <name type="scientific">Arabidopsis thaliana</name>
    <name type="common">Mouse-ear cress</name>
    <dbReference type="NCBI Taxonomy" id="3702"/>
    <lineage>
        <taxon>Eukaryota</taxon>
        <taxon>Viridiplantae</taxon>
        <taxon>Streptophyta</taxon>
        <taxon>Embryophyta</taxon>
        <taxon>Tracheophyta</taxon>
        <taxon>Spermatophyta</taxon>
        <taxon>Magnoliopsida</taxon>
        <taxon>eudicotyledons</taxon>
        <taxon>Gunneridae</taxon>
        <taxon>Pentapetalae</taxon>
        <taxon>rosids</taxon>
        <taxon>malvids</taxon>
        <taxon>Brassicales</taxon>
        <taxon>Brassicaceae</taxon>
        <taxon>Camelineae</taxon>
        <taxon>Arabidopsis</taxon>
    </lineage>
</organism>
<protein>
    <recommendedName>
        <fullName evidence="12">Regulatory protein NPR4</fullName>
    </recommendedName>
    <alternativeName>
        <fullName evidence="12">BTB/POZ domain-containing protein NPR4</fullName>
    </alternativeName>
</protein>
<reference key="1">
    <citation type="journal article" date="2005" name="Plant J.">
        <title>An Arabidopsis NPR1-like gene, NPR4, is required for disease resistance.</title>
        <authorList>
            <person name="Liu G."/>
            <person name="Holub E.B."/>
            <person name="Alonso J.M."/>
            <person name="Ecker J.R."/>
            <person name="Fobert P.R."/>
        </authorList>
    </citation>
    <scope>NUCLEOTIDE SEQUENCE [MRNA]</scope>
    <scope>GENE FAMILY</scope>
    <scope>NOMENCLATURE</scope>
    <scope>FUNCTION</scope>
    <scope>DISRUPTION PHENOTYPE</scope>
    <scope>INDUCTION</scope>
    <scope>SUBCELLULAR LOCATION</scope>
    <scope>INTERACTION WITH TGA FACTORS</scope>
    <scope>MUTAGENESIS OF HIS-321</scope>
    <source>
        <strain>cv. Columbia</strain>
        <tissue>Leaf</tissue>
    </source>
</reference>
<reference key="2">
    <citation type="journal article" date="1999" name="Nature">
        <title>Sequence and analysis of chromosome 4 of the plant Arabidopsis thaliana.</title>
        <authorList>
            <person name="Mayer K.F.X."/>
            <person name="Schueller C."/>
            <person name="Wambutt R."/>
            <person name="Murphy G."/>
            <person name="Volckaert G."/>
            <person name="Pohl T."/>
            <person name="Duesterhoeft A."/>
            <person name="Stiekema W."/>
            <person name="Entian K.-D."/>
            <person name="Terryn N."/>
            <person name="Harris B."/>
            <person name="Ansorge W."/>
            <person name="Brandt P."/>
            <person name="Grivell L.A."/>
            <person name="Rieger M."/>
            <person name="Weichselgartner M."/>
            <person name="de Simone V."/>
            <person name="Obermaier B."/>
            <person name="Mache R."/>
            <person name="Mueller M."/>
            <person name="Kreis M."/>
            <person name="Delseny M."/>
            <person name="Puigdomenech P."/>
            <person name="Watson M."/>
            <person name="Schmidtheini T."/>
            <person name="Reichert B."/>
            <person name="Portetelle D."/>
            <person name="Perez-Alonso M."/>
            <person name="Boutry M."/>
            <person name="Bancroft I."/>
            <person name="Vos P."/>
            <person name="Hoheisel J."/>
            <person name="Zimmermann W."/>
            <person name="Wedler H."/>
            <person name="Ridley P."/>
            <person name="Langham S.-A."/>
            <person name="McCullagh B."/>
            <person name="Bilham L."/>
            <person name="Robben J."/>
            <person name="van der Schueren J."/>
            <person name="Grymonprez B."/>
            <person name="Chuang Y.-J."/>
            <person name="Vandenbussche F."/>
            <person name="Braeken M."/>
            <person name="Weltjens I."/>
            <person name="Voet M."/>
            <person name="Bastiaens I."/>
            <person name="Aert R."/>
            <person name="Defoor E."/>
            <person name="Weitzenegger T."/>
            <person name="Bothe G."/>
            <person name="Ramsperger U."/>
            <person name="Hilbert H."/>
            <person name="Braun M."/>
            <person name="Holzer E."/>
            <person name="Brandt A."/>
            <person name="Peters S."/>
            <person name="van Staveren M."/>
            <person name="Dirkse W."/>
            <person name="Mooijman P."/>
            <person name="Klein Lankhorst R."/>
            <person name="Rose M."/>
            <person name="Hauf J."/>
            <person name="Koetter P."/>
            <person name="Berneiser S."/>
            <person name="Hempel S."/>
            <person name="Feldpausch M."/>
            <person name="Lamberth S."/>
            <person name="Van den Daele H."/>
            <person name="De Keyser A."/>
            <person name="Buysshaert C."/>
            <person name="Gielen J."/>
            <person name="Villarroel R."/>
            <person name="De Clercq R."/>
            <person name="van Montagu M."/>
            <person name="Rogers J."/>
            <person name="Cronin A."/>
            <person name="Quail M.A."/>
            <person name="Bray-Allen S."/>
            <person name="Clark L."/>
            <person name="Doggett J."/>
            <person name="Hall S."/>
            <person name="Kay M."/>
            <person name="Lennard N."/>
            <person name="McLay K."/>
            <person name="Mayes R."/>
            <person name="Pettett A."/>
            <person name="Rajandream M.A."/>
            <person name="Lyne M."/>
            <person name="Benes V."/>
            <person name="Rechmann S."/>
            <person name="Borkova D."/>
            <person name="Bloecker H."/>
            <person name="Scharfe M."/>
            <person name="Grimm M."/>
            <person name="Loehnert T.-H."/>
            <person name="Dose S."/>
            <person name="de Haan M."/>
            <person name="Maarse A.C."/>
            <person name="Schaefer M."/>
            <person name="Mueller-Auer S."/>
            <person name="Gabel C."/>
            <person name="Fuchs M."/>
            <person name="Fartmann B."/>
            <person name="Granderath K."/>
            <person name="Dauner D."/>
            <person name="Herzl A."/>
            <person name="Neumann S."/>
            <person name="Argiriou A."/>
            <person name="Vitale D."/>
            <person name="Liguori R."/>
            <person name="Piravandi E."/>
            <person name="Massenet O."/>
            <person name="Quigley F."/>
            <person name="Clabauld G."/>
            <person name="Muendlein A."/>
            <person name="Felber R."/>
            <person name="Schnabl S."/>
            <person name="Hiller R."/>
            <person name="Schmidt W."/>
            <person name="Lecharny A."/>
            <person name="Aubourg S."/>
            <person name="Chefdor F."/>
            <person name="Cooke R."/>
            <person name="Berger C."/>
            <person name="Monfort A."/>
            <person name="Casacuberta E."/>
            <person name="Gibbons T."/>
            <person name="Weber N."/>
            <person name="Vandenbol M."/>
            <person name="Bargues M."/>
            <person name="Terol J."/>
            <person name="Torres A."/>
            <person name="Perez-Perez A."/>
            <person name="Purnelle B."/>
            <person name="Bent E."/>
            <person name="Johnson S."/>
            <person name="Tacon D."/>
            <person name="Jesse T."/>
            <person name="Heijnen L."/>
            <person name="Schwarz S."/>
            <person name="Scholler P."/>
            <person name="Heber S."/>
            <person name="Francs P."/>
            <person name="Bielke C."/>
            <person name="Frishman D."/>
            <person name="Haase D."/>
            <person name="Lemcke K."/>
            <person name="Mewes H.-W."/>
            <person name="Stocker S."/>
            <person name="Zaccaria P."/>
            <person name="Bevan M."/>
            <person name="Wilson R.K."/>
            <person name="de la Bastide M."/>
            <person name="Habermann K."/>
            <person name="Parnell L."/>
            <person name="Dedhia N."/>
            <person name="Gnoj L."/>
            <person name="Schutz K."/>
            <person name="Huang E."/>
            <person name="Spiegel L."/>
            <person name="Sekhon M."/>
            <person name="Murray J."/>
            <person name="Sheet P."/>
            <person name="Cordes M."/>
            <person name="Abu-Threideh J."/>
            <person name="Stoneking T."/>
            <person name="Kalicki J."/>
            <person name="Graves T."/>
            <person name="Harmon G."/>
            <person name="Edwards J."/>
            <person name="Latreille P."/>
            <person name="Courtney L."/>
            <person name="Cloud J."/>
            <person name="Abbott A."/>
            <person name="Scott K."/>
            <person name="Johnson D."/>
            <person name="Minx P."/>
            <person name="Bentley D."/>
            <person name="Fulton B."/>
            <person name="Miller N."/>
            <person name="Greco T."/>
            <person name="Kemp K."/>
            <person name="Kramer J."/>
            <person name="Fulton L."/>
            <person name="Mardis E."/>
            <person name="Dante M."/>
            <person name="Pepin K."/>
            <person name="Hillier L.W."/>
            <person name="Nelson J."/>
            <person name="Spieth J."/>
            <person name="Ryan E."/>
            <person name="Andrews S."/>
            <person name="Geisel C."/>
            <person name="Layman D."/>
            <person name="Du H."/>
            <person name="Ali J."/>
            <person name="Berghoff A."/>
            <person name="Jones K."/>
            <person name="Drone K."/>
            <person name="Cotton M."/>
            <person name="Joshu C."/>
            <person name="Antonoiu B."/>
            <person name="Zidanic M."/>
            <person name="Strong C."/>
            <person name="Sun H."/>
            <person name="Lamar B."/>
            <person name="Yordan C."/>
            <person name="Ma P."/>
            <person name="Zhong J."/>
            <person name="Preston R."/>
            <person name="Vil D."/>
            <person name="Shekher M."/>
            <person name="Matero A."/>
            <person name="Shah R."/>
            <person name="Swaby I.K."/>
            <person name="O'Shaughnessy A."/>
            <person name="Rodriguez M."/>
            <person name="Hoffman J."/>
            <person name="Till S."/>
            <person name="Granat S."/>
            <person name="Shohdy N."/>
            <person name="Hasegawa A."/>
            <person name="Hameed A."/>
            <person name="Lodhi M."/>
            <person name="Johnson A."/>
            <person name="Chen E."/>
            <person name="Marra M.A."/>
            <person name="Martienssen R."/>
            <person name="McCombie W.R."/>
        </authorList>
    </citation>
    <scope>NUCLEOTIDE SEQUENCE [LARGE SCALE GENOMIC DNA]</scope>
    <source>
        <strain>cv. Columbia</strain>
    </source>
</reference>
<reference key="3">
    <citation type="journal article" date="2017" name="Plant J.">
        <title>Araport11: a complete reannotation of the Arabidopsis thaliana reference genome.</title>
        <authorList>
            <person name="Cheng C.Y."/>
            <person name="Krishnakumar V."/>
            <person name="Chan A.P."/>
            <person name="Thibaud-Nissen F."/>
            <person name="Schobel S."/>
            <person name="Town C.D."/>
        </authorList>
    </citation>
    <scope>GENOME REANNOTATION</scope>
    <source>
        <strain>cv. Columbia</strain>
    </source>
</reference>
<reference key="4">
    <citation type="journal article" date="2005" name="J. Biol. Chem.">
        <title>Cullins 3a and 3b assemble with members of the broad complex/tramtrack/bric-a-brac (BTB) protein family to form essential ubiquitin-protein ligases (E3s) in Arabidopsis.</title>
        <authorList>
            <person name="Gingerich D.J."/>
            <person name="Gagne J.M."/>
            <person name="Salter D.W."/>
            <person name="Hellmann H."/>
            <person name="Estelle M."/>
            <person name="Ma L."/>
            <person name="Vierstra R.D."/>
        </authorList>
    </citation>
    <scope>DOMAIN BTB</scope>
</reference>
<reference key="5">
    <citation type="journal article" date="2006" name="Plant J.">
        <title>Negative regulation of defense responses in Arabidopsis by two NPR1 paralogs.</title>
        <authorList>
            <person name="Zhang Y."/>
            <person name="Cheng Y.T."/>
            <person name="Qu N."/>
            <person name="Zhao Q."/>
            <person name="Bi D."/>
            <person name="Li X."/>
        </authorList>
    </citation>
    <scope>FUNCTION</scope>
    <scope>INDUCTION</scope>
    <scope>INTERACTION WITH TGA FACTORS</scope>
</reference>
<reference key="6">
    <citation type="journal article" date="2012" name="Nature">
        <title>NPR3 and NPR4 are receptors for the immune signal salicylic acid in plants.</title>
        <authorList>
            <person name="Fu Z.Q."/>
            <person name="Yan S."/>
            <person name="Saleh A."/>
            <person name="Wang W."/>
            <person name="Ruble J."/>
            <person name="Oka N."/>
            <person name="Mohan R."/>
            <person name="Spoel S.H."/>
            <person name="Tada Y."/>
            <person name="Zheng N."/>
            <person name="Dong X."/>
        </authorList>
    </citation>
    <scope>FUNCTION</scope>
    <scope>DISRUPTION PHENOTYPE</scope>
    <scope>INTERACTION WITH NPR1; NPR3 AND CUL3A</scope>
    <scope>SUBUNIT</scope>
    <scope>PATHWAY</scope>
    <source>
        <strain>cv. Columbia</strain>
    </source>
</reference>
<reference key="7">
    <citation type="journal article" date="2015" name="Cell Host Microbe">
        <title>Posttranslational modifications of the master transcriptional regulator NPR1 enable dynamic but tight control of plant immune responses.</title>
        <authorList>
            <person name="Saleh A."/>
            <person name="Withers J."/>
            <person name="Mohan R."/>
            <person name="Marques J."/>
            <person name="Gu Y."/>
            <person name="Yan S."/>
            <person name="Zavaliev R."/>
            <person name="Nomoto M."/>
            <person name="Tada Y."/>
            <person name="Dong X."/>
        </authorList>
    </citation>
    <scope>FUNCTION</scope>
    <scope>INTERACTION WITH NPR1</scope>
</reference>
<reference evidence="17" key="8">
    <citation type="journal article" date="2020" name="Nature">
        <title>Structural basis of salicylic acid perception by Arabidopsis NPR proteins.</title>
        <authorList>
            <person name="Wang W."/>
            <person name="Withers J."/>
            <person name="Li H."/>
            <person name="Zwack P.J."/>
            <person name="Rusnac D.V."/>
            <person name="Shi H."/>
            <person name="Liu L."/>
            <person name="Yan S."/>
            <person name="Hinds T.R."/>
            <person name="Guttman M."/>
            <person name="Dong X."/>
            <person name="Zheng N."/>
        </authorList>
    </citation>
    <scope>X-RAY CRYSTALLOGRAPHY (2.28 ANGSTROMS) OF 373-516 IN COMPLEX WITH SALICYLATE</scope>
    <scope>FUNCTION</scope>
    <scope>DISRUPTION PHENOTYPE</scope>
    <scope>MUTAGENESIS OF PRO-392; ARG-419; VAL-420; ALA-423; PHE-426; ALA-431; ALA-434; THR-459; GLU-469; THR-470; THR-488; VAL-489; PHE-496; TYR-500; LEU-503 AND LYS-505</scope>
    <scope>INTERACTION WITH NPR1</scope>
    <source>
        <strain>cv. Columbia</strain>
    </source>
</reference>
<sequence length="574" mass="65115">MAATAIEPSSSISFTSSHLSNPSPVVTTYHSAANLEELSSNLEQLLTNPDCDYTDAEIIIEEEANPVSVHRCVLAARSKFFLDLFKKDKDSSEKKPKYQMKDLLPYGNVGREAFLHFLSYIYTGRLKPFPIEVSTCVDSVCAHDSCKPAIDFAVELMYASFVFQIPDLVSSFQRKLRNYVEKSLVENVLPILLVAFHCDLTQLLDQCIERVARSDLDRFCIEKELPLEVLEKIKQLRVKSVNIPEVEDKSIERTGKVLKALDSDDVELVKLLLTESDITLDQANGLHYAVAYSDPKVVTQVLDLDMADVNFRNSRGYTVLHIAAMRREPTIIIPLIQKGANASDFTFDGRSAVNICRRLTRPKDYHTKTSRKEPSKYRLCIDILEREIRRNPLVSGDTPTCSHSMPEDLQMRLLYLEKRVGLAQLFFPAEANVAMDVANVEGTSECTGLLTPPPSNDTTENLGKVDLNETPYVQTKRMLTRMKALMKTVETGRRYFPSCYEVLDKYMDQYMDEEIPDMSYPEKGTVKERRQKRMRYNELKNDVKKAYSKDKVARSCLSSSSPASSLREALENPT</sequence>
<accession>Q5ICL9</accession>
<accession>O81848</accession>
<evidence type="ECO:0000250" key="1">
    <source>
        <dbReference type="UniProtKB" id="P93002"/>
    </source>
</evidence>
<evidence type="ECO:0000255" key="2"/>
<evidence type="ECO:0000255" key="3">
    <source>
        <dbReference type="PROSITE-ProRule" id="PRU00037"/>
    </source>
</evidence>
<evidence type="ECO:0000255" key="4">
    <source>
        <dbReference type="PROSITE-ProRule" id="PRU01391"/>
    </source>
</evidence>
<evidence type="ECO:0000256" key="5">
    <source>
        <dbReference type="SAM" id="MobiDB-lite"/>
    </source>
</evidence>
<evidence type="ECO:0000269" key="6">
    <source>
    </source>
</evidence>
<evidence type="ECO:0000269" key="7">
    <source>
    </source>
</evidence>
<evidence type="ECO:0000269" key="8">
    <source>
    </source>
</evidence>
<evidence type="ECO:0000269" key="9">
    <source>
    </source>
</evidence>
<evidence type="ECO:0000269" key="10">
    <source>
    </source>
</evidence>
<evidence type="ECO:0000269" key="11">
    <source>
    </source>
</evidence>
<evidence type="ECO:0000303" key="12">
    <source>
    </source>
</evidence>
<evidence type="ECO:0000305" key="13"/>
<evidence type="ECO:0000305" key="14">
    <source>
    </source>
</evidence>
<evidence type="ECO:0000312" key="15">
    <source>
        <dbReference type="Araport" id="AT4G19660"/>
    </source>
</evidence>
<evidence type="ECO:0000312" key="16">
    <source>
        <dbReference type="EMBL" id="CAA19683.1"/>
    </source>
</evidence>
<evidence type="ECO:0007744" key="17">
    <source>
        <dbReference type="PDB" id="6WPG"/>
    </source>
</evidence>
<evidence type="ECO:0007829" key="18">
    <source>
        <dbReference type="PDB" id="6WPG"/>
    </source>
</evidence>
<proteinExistence type="evidence at protein level"/>
<feature type="chain" id="PRO_0000407993" description="Regulatory protein NPR4">
    <location>
        <begin position="1"/>
        <end position="574"/>
    </location>
</feature>
<feature type="domain" description="BTB" evidence="3">
    <location>
        <begin position="54"/>
        <end position="130"/>
    </location>
</feature>
<feature type="repeat" description="ANK 1" evidence="2">
    <location>
        <begin position="252"/>
        <end position="280"/>
    </location>
</feature>
<feature type="repeat" description="ANK 2" evidence="2">
    <location>
        <begin position="281"/>
        <end position="311"/>
    </location>
</feature>
<feature type="repeat" description="ANK 3" evidence="2">
    <location>
        <begin position="315"/>
        <end position="344"/>
    </location>
</feature>
<feature type="zinc finger region" description="C2HC NPR-type" evidence="4">
    <location>
        <begin position="133"/>
        <end position="147"/>
    </location>
</feature>
<feature type="region of interest" description="Disordered" evidence="5">
    <location>
        <begin position="1"/>
        <end position="21"/>
    </location>
</feature>
<feature type="region of interest" description="Salicylic acid-binding core (SBC)" evidence="14">
    <location>
        <begin position="373"/>
        <end position="516"/>
    </location>
</feature>
<feature type="region of interest" description="Disordered" evidence="5">
    <location>
        <begin position="521"/>
        <end position="574"/>
    </location>
</feature>
<feature type="compositionally biased region" description="Low complexity" evidence="5">
    <location>
        <begin position="9"/>
        <end position="20"/>
    </location>
</feature>
<feature type="compositionally biased region" description="Basic and acidic residues" evidence="5">
    <location>
        <begin position="535"/>
        <end position="553"/>
    </location>
</feature>
<feature type="compositionally biased region" description="Low complexity" evidence="5">
    <location>
        <begin position="554"/>
        <end position="567"/>
    </location>
</feature>
<feature type="binding site" evidence="4">
    <location>
        <position position="136"/>
    </location>
    <ligand>
        <name>Zn(2+)</name>
        <dbReference type="ChEBI" id="CHEBI:29105"/>
    </ligand>
</feature>
<feature type="binding site" evidence="4">
    <location>
        <position position="141"/>
    </location>
    <ligand>
        <name>Zn(2+)</name>
        <dbReference type="ChEBI" id="CHEBI:29105"/>
    </ligand>
</feature>
<feature type="binding site" evidence="4">
    <location>
        <position position="143"/>
    </location>
    <ligand>
        <name>Zn(2+)</name>
        <dbReference type="ChEBI" id="CHEBI:29105"/>
    </ligand>
</feature>
<feature type="binding site" evidence="4">
    <location>
        <position position="146"/>
    </location>
    <ligand>
        <name>Zn(2+)</name>
        <dbReference type="ChEBI" id="CHEBI:29105"/>
    </ligand>
</feature>
<feature type="binding site" evidence="11 17">
    <location>
        <position position="419"/>
    </location>
    <ligand>
        <name>salicylate</name>
        <dbReference type="ChEBI" id="CHEBI:30762"/>
    </ligand>
</feature>
<feature type="modified residue" description="Phosphoserine" evidence="1">
    <location>
        <position position="11"/>
    </location>
</feature>
<feature type="mutagenesis site" description="Abolishes interaction with TGA2 or with TGA7." evidence="6">
    <original>H</original>
    <variation>Y</variation>
    <location>
        <position position="321"/>
    </location>
</feature>
<feature type="mutagenesis site" description="Normal salicylic acid (SA) binding." evidence="11">
    <original>P</original>
    <variation>Q</variation>
    <location>
        <position position="392"/>
    </location>
</feature>
<feature type="mutagenesis site" description="Impaired salicylic acid (SA) binding." evidence="11">
    <original>R</original>
    <variation>K</variation>
    <variation>A</variation>
    <location>
        <position position="419"/>
    </location>
</feature>
<feature type="mutagenesis site" description="Impaired salicylic acid (SA) binding. Interacts with NPR1 in the absence of SA, and lost ability of SA to repress this interaction." evidence="11">
    <original>R</original>
    <variation>Q</variation>
    <location>
        <position position="419"/>
    </location>
</feature>
<feature type="mutagenesis site" description="Impaired salicylic acid (SA) binding." evidence="11">
    <original>V</original>
    <variation>A</variation>
    <location>
        <position position="420"/>
    </location>
</feature>
<feature type="mutagenesis site" description="Impaired salicylic acid (SA) binding." evidence="11">
    <original>A</original>
    <variation>F</variation>
    <variation>E</variation>
    <location>
        <position position="423"/>
    </location>
</feature>
<feature type="mutagenesis site" description="Strongly reduced salicylic acid (SA) binding. Interacts with NPR1 in the absence of SA, and lost ability of SA to repress this interaction, thus leading to faster NPR1 degradation but reduced PR1 induction. Strongly increased salicylic acid (SA) binding leading to restored ability of SA to repress NPR1 binding and delayed NPR1 degradation resulting in increased levels of SA-induced PR1 gene expression; when associated with G-459." evidence="11">
    <original>F</original>
    <variation>L</variation>
    <location>
        <position position="426"/>
    </location>
</feature>
<feature type="mutagenesis site" description="Impaired salicylic acid (SA) binding." evidence="11">
    <original>A</original>
    <variation>L</variation>
    <variation>R</variation>
    <location>
        <position position="431"/>
    </location>
</feature>
<feature type="mutagenesis site" description="Impaired salicylic acid (SA) binding." evidence="11">
    <original>A</original>
    <variation>R</variation>
    <location>
        <position position="434"/>
    </location>
</feature>
<feature type="mutagenesis site" description="Reduced salicylic acid (SA) binding." evidence="11">
    <original>A</original>
    <variation>V</variation>
    <location>
        <position position="434"/>
    </location>
</feature>
<feature type="mutagenesis site" description="Slightly increased salicylic acid (SA) binding." evidence="11">
    <original>T</original>
    <variation>A</variation>
    <location>
        <position position="459"/>
    </location>
</feature>
<feature type="mutagenesis site" description="Slightly increased salicylic acid (SA) binding. Strongly increased salicylic acid (SA) binding leading to restored ability of SA to repress NPR1 binding and delayed NPR1 degradation resulting in increased levels of SA-induced PR1 gene expression; when associated with L-426." evidence="11">
    <original>T</original>
    <variation>G</variation>
    <location>
        <position position="459"/>
    </location>
</feature>
<feature type="mutagenesis site" description="Normal salicylic acid (SA) binding." evidence="11">
    <original>E</original>
    <variation>I</variation>
    <location>
        <position position="469"/>
    </location>
</feature>
<feature type="mutagenesis site" description="Slightly increased salicylic acid (SA) binding." evidence="11">
    <original>T</original>
    <variation>A</variation>
    <location>
        <position position="470"/>
    </location>
</feature>
<feature type="mutagenesis site" description="Reduced salicylic acid (SA) binding." evidence="11">
    <original>T</original>
    <variation>A</variation>
    <location>
        <position position="488"/>
    </location>
</feature>
<feature type="mutagenesis site" description="Normal salicylic acid (SA) binding. Interacts with NPR1 in the absence of SA, but this interaction is repressed by SA." evidence="11">
    <original>T</original>
    <variation>V</variation>
    <location>
        <position position="488"/>
    </location>
</feature>
<feature type="mutagenesis site" description="Impaired salicylic acid (SA) binding. Interacts with NPR1 in the absence of SA, and lost ability of SA to repress this interaction." evidence="11">
    <original>V</original>
    <variation>A</variation>
    <location>
        <position position="489"/>
    </location>
</feature>
<feature type="mutagenesis site" description="Reduced salicylic acid (SA) binding." evidence="11">
    <original>F</original>
    <variation>A</variation>
    <location>
        <position position="496"/>
    </location>
</feature>
<feature type="mutagenesis site" description="Normal salicylic acid (SA) binding." evidence="11">
    <original>Y</original>
    <variation>S</variation>
    <location>
        <position position="500"/>
    </location>
</feature>
<feature type="mutagenesis site" description="Impaired salicylic acid (SA) binding." evidence="11">
    <original>L</original>
    <variation>A</variation>
    <location>
        <position position="503"/>
    </location>
</feature>
<feature type="mutagenesis site" description="Slightly increased salicylic acid (SA) binding." evidence="11">
    <original>K</original>
    <variation>A</variation>
    <location>
        <position position="505"/>
    </location>
</feature>
<feature type="mutagenesis site" description="Slightly reduced salicylic acid (SA) binding." evidence="11">
    <original>K</original>
    <variation>Q</variation>
    <location>
        <position position="505"/>
    </location>
</feature>
<feature type="helix" evidence="18">
    <location>
        <begin position="373"/>
        <end position="389"/>
    </location>
</feature>
<feature type="helix" evidence="18">
    <location>
        <begin position="409"/>
        <end position="426"/>
    </location>
</feature>
<feature type="helix" evidence="18">
    <location>
        <begin position="428"/>
        <end position="438"/>
    </location>
</feature>
<feature type="helix" evidence="18">
    <location>
        <begin position="471"/>
        <end position="495"/>
    </location>
</feature>
<feature type="helix" evidence="18">
    <location>
        <begin position="497"/>
        <end position="508"/>
    </location>
</feature>
<keyword id="KW-0002">3D-structure</keyword>
<keyword id="KW-0040">ANK repeat</keyword>
<keyword id="KW-0381">Hypersensitive response</keyword>
<keyword id="KW-0479">Metal-binding</keyword>
<keyword id="KW-0539">Nucleus</keyword>
<keyword id="KW-0597">Phosphoprotein</keyword>
<keyword id="KW-0611">Plant defense</keyword>
<keyword id="KW-1185">Reference proteome</keyword>
<keyword id="KW-0677">Repeat</keyword>
<keyword id="KW-0833">Ubl conjugation pathway</keyword>
<keyword id="KW-0862">Zinc</keyword>
<keyword id="KW-0863">Zinc-finger</keyword>
<dbReference type="EMBL" id="AY785951">
    <property type="protein sequence ID" value="AAW31628.1"/>
    <property type="molecule type" value="mRNA"/>
</dbReference>
<dbReference type="EMBL" id="AL024486">
    <property type="protein sequence ID" value="CAA19683.1"/>
    <property type="status" value="ALT_SEQ"/>
    <property type="molecule type" value="Genomic_DNA"/>
</dbReference>
<dbReference type="EMBL" id="AL161551">
    <property type="protein sequence ID" value="CAB78968.1"/>
    <property type="status" value="ALT_SEQ"/>
    <property type="molecule type" value="Genomic_DNA"/>
</dbReference>
<dbReference type="EMBL" id="CP002687">
    <property type="protein sequence ID" value="AEE84211.1"/>
    <property type="molecule type" value="Genomic_DNA"/>
</dbReference>
<dbReference type="PIR" id="T04747">
    <property type="entry name" value="T04747"/>
</dbReference>
<dbReference type="RefSeq" id="NP_001328027.1">
    <property type="nucleotide sequence ID" value="NM_001341366.1"/>
</dbReference>
<dbReference type="RefSeq" id="NP_193701.2">
    <property type="nucleotide sequence ID" value="NM_118086.3"/>
</dbReference>
<dbReference type="PDB" id="6WPG">
    <property type="method" value="X-ray"/>
    <property type="resolution" value="2.28 A"/>
    <property type="chains" value="A/B=373-516"/>
</dbReference>
<dbReference type="PDBsum" id="6WPG"/>
<dbReference type="SMR" id="Q5ICL9"/>
<dbReference type="BioGRID" id="13003">
    <property type="interactions" value="16"/>
</dbReference>
<dbReference type="DIP" id="DIP-40035N"/>
<dbReference type="FunCoup" id="Q5ICL9">
    <property type="interactions" value="915"/>
</dbReference>
<dbReference type="IntAct" id="Q5ICL9">
    <property type="interactions" value="18"/>
</dbReference>
<dbReference type="STRING" id="3702.Q5ICL9"/>
<dbReference type="PaxDb" id="3702-AT4G19660.1"/>
<dbReference type="ProteomicsDB" id="251071"/>
<dbReference type="EnsemblPlants" id="AT4G19660.1">
    <property type="protein sequence ID" value="AT4G19660.1"/>
    <property type="gene ID" value="AT4G19660"/>
</dbReference>
<dbReference type="GeneID" id="827710"/>
<dbReference type="Gramene" id="AT4G19660.1">
    <property type="protein sequence ID" value="AT4G19660.1"/>
    <property type="gene ID" value="AT4G19660"/>
</dbReference>
<dbReference type="KEGG" id="ath:AT4G19660"/>
<dbReference type="Araport" id="AT4G19660"/>
<dbReference type="TAIR" id="AT4G19660">
    <property type="gene designation" value="NPR4"/>
</dbReference>
<dbReference type="eggNOG" id="KOG0504">
    <property type="taxonomic scope" value="Eukaryota"/>
</dbReference>
<dbReference type="HOGENOM" id="CLU_034895_1_0_1"/>
<dbReference type="InParanoid" id="Q5ICL9"/>
<dbReference type="OMA" id="MSHPEKG"/>
<dbReference type="PhylomeDB" id="Q5ICL9"/>
<dbReference type="UniPathway" id="UPA00143"/>
<dbReference type="PRO" id="PR:Q5ICL9"/>
<dbReference type="Proteomes" id="UP000006548">
    <property type="component" value="Chromosome 4"/>
</dbReference>
<dbReference type="ExpressionAtlas" id="Q5ICL9">
    <property type="expression patterns" value="baseline and differential"/>
</dbReference>
<dbReference type="GO" id="GO:0005634">
    <property type="term" value="C:nucleus"/>
    <property type="evidence" value="ECO:0000314"/>
    <property type="project" value="TAIR"/>
</dbReference>
<dbReference type="GO" id="GO:0042802">
    <property type="term" value="F:identical protein binding"/>
    <property type="evidence" value="ECO:0000353"/>
    <property type="project" value="IntAct"/>
</dbReference>
<dbReference type="GO" id="GO:0042803">
    <property type="term" value="F:protein homodimerization activity"/>
    <property type="evidence" value="ECO:0000314"/>
    <property type="project" value="UniProtKB"/>
</dbReference>
<dbReference type="GO" id="GO:1901149">
    <property type="term" value="F:salicylic acid binding"/>
    <property type="evidence" value="ECO:0000314"/>
    <property type="project" value="UniProtKB"/>
</dbReference>
<dbReference type="GO" id="GO:0008270">
    <property type="term" value="F:zinc ion binding"/>
    <property type="evidence" value="ECO:0007669"/>
    <property type="project" value="UniProtKB-KW"/>
</dbReference>
<dbReference type="GO" id="GO:0042742">
    <property type="term" value="P:defense response to bacterium"/>
    <property type="evidence" value="ECO:0000315"/>
    <property type="project" value="UniProtKB"/>
</dbReference>
<dbReference type="GO" id="GO:0050832">
    <property type="term" value="P:defense response to fungus"/>
    <property type="evidence" value="ECO:0000315"/>
    <property type="project" value="UniProtKB"/>
</dbReference>
<dbReference type="GO" id="GO:0009626">
    <property type="term" value="P:plant-type hypersensitive response"/>
    <property type="evidence" value="ECO:0000315"/>
    <property type="project" value="UniProtKB"/>
</dbReference>
<dbReference type="GO" id="GO:0016567">
    <property type="term" value="P:protein ubiquitination"/>
    <property type="evidence" value="ECO:0007669"/>
    <property type="project" value="UniProtKB-UniPathway"/>
</dbReference>
<dbReference type="GO" id="GO:2000022">
    <property type="term" value="P:regulation of jasmonic acid mediated signaling pathway"/>
    <property type="evidence" value="ECO:0000315"/>
    <property type="project" value="UniProtKB"/>
</dbReference>
<dbReference type="GO" id="GO:2000031">
    <property type="term" value="P:regulation of salicylic acid mediated signaling pathway"/>
    <property type="evidence" value="ECO:0000315"/>
    <property type="project" value="UniProtKB"/>
</dbReference>
<dbReference type="GO" id="GO:0010112">
    <property type="term" value="P:regulation of systemic acquired resistance"/>
    <property type="evidence" value="ECO:0000315"/>
    <property type="project" value="UniProtKB"/>
</dbReference>
<dbReference type="GO" id="GO:0009617">
    <property type="term" value="P:response to bacterium"/>
    <property type="evidence" value="ECO:0000270"/>
    <property type="project" value="TAIR"/>
</dbReference>
<dbReference type="GO" id="GO:0009620">
    <property type="term" value="P:response to fungus"/>
    <property type="evidence" value="ECO:0000315"/>
    <property type="project" value="TAIR"/>
</dbReference>
<dbReference type="GO" id="GO:0009751">
    <property type="term" value="P:response to salicylic acid"/>
    <property type="evidence" value="ECO:0000314"/>
    <property type="project" value="UniProtKB"/>
</dbReference>
<dbReference type="GO" id="GO:0009627">
    <property type="term" value="P:systemic acquired resistance"/>
    <property type="evidence" value="ECO:0000316"/>
    <property type="project" value="TAIR"/>
</dbReference>
<dbReference type="GO" id="GO:0009862">
    <property type="term" value="P:systemic acquired resistance, salicylic acid mediated signaling pathway"/>
    <property type="evidence" value="ECO:0007669"/>
    <property type="project" value="InterPro"/>
</dbReference>
<dbReference type="CDD" id="cd18310">
    <property type="entry name" value="BTB_POZ_NPR_plant"/>
    <property type="match status" value="1"/>
</dbReference>
<dbReference type="FunFam" id="3.30.710.10:FF:000110">
    <property type="entry name" value="Regulatory protein NPR3"/>
    <property type="match status" value="1"/>
</dbReference>
<dbReference type="FunFam" id="1.25.40.20:FF:000123">
    <property type="entry name" value="regulatory protein NPR3-like"/>
    <property type="match status" value="1"/>
</dbReference>
<dbReference type="Gene3D" id="1.25.40.20">
    <property type="entry name" value="Ankyrin repeat-containing domain"/>
    <property type="match status" value="1"/>
</dbReference>
<dbReference type="Gene3D" id="3.30.710.10">
    <property type="entry name" value="Potassium Channel Kv1.1, Chain A"/>
    <property type="match status" value="1"/>
</dbReference>
<dbReference type="InterPro" id="IPR002110">
    <property type="entry name" value="Ankyrin_rpt"/>
</dbReference>
<dbReference type="InterPro" id="IPR036770">
    <property type="entry name" value="Ankyrin_rpt-contain_sf"/>
</dbReference>
<dbReference type="InterPro" id="IPR000210">
    <property type="entry name" value="BTB/POZ_dom"/>
</dbReference>
<dbReference type="InterPro" id="IPR044292">
    <property type="entry name" value="NPR"/>
</dbReference>
<dbReference type="InterPro" id="IPR021094">
    <property type="entry name" value="NPR1/NIM1-like_C"/>
</dbReference>
<dbReference type="InterPro" id="IPR024228">
    <property type="entry name" value="NPR_central_dom"/>
</dbReference>
<dbReference type="InterPro" id="IPR011333">
    <property type="entry name" value="SKP1/BTB/POZ_sf"/>
</dbReference>
<dbReference type="PANTHER" id="PTHR46475">
    <property type="entry name" value="REGULATORY PROTEIN NPR3"/>
    <property type="match status" value="1"/>
</dbReference>
<dbReference type="PANTHER" id="PTHR46475:SF12">
    <property type="entry name" value="REGULATORY PROTEIN NPR4"/>
    <property type="match status" value="1"/>
</dbReference>
<dbReference type="Pfam" id="PF12796">
    <property type="entry name" value="Ank_2"/>
    <property type="match status" value="1"/>
</dbReference>
<dbReference type="Pfam" id="PF00651">
    <property type="entry name" value="BTB"/>
    <property type="match status" value="1"/>
</dbReference>
<dbReference type="Pfam" id="PF11900">
    <property type="entry name" value="DUF3420"/>
    <property type="match status" value="1"/>
</dbReference>
<dbReference type="Pfam" id="PF12313">
    <property type="entry name" value="NPR1_like_C"/>
    <property type="match status" value="1"/>
</dbReference>
<dbReference type="SMART" id="SM00248">
    <property type="entry name" value="ANK"/>
    <property type="match status" value="2"/>
</dbReference>
<dbReference type="SMART" id="SM00225">
    <property type="entry name" value="BTB"/>
    <property type="match status" value="1"/>
</dbReference>
<dbReference type="SUPFAM" id="SSF48403">
    <property type="entry name" value="Ankyrin repeat"/>
    <property type="match status" value="1"/>
</dbReference>
<dbReference type="SUPFAM" id="SSF54695">
    <property type="entry name" value="POZ domain"/>
    <property type="match status" value="1"/>
</dbReference>
<dbReference type="PROSITE" id="PS50297">
    <property type="entry name" value="ANK_REP_REGION"/>
    <property type="match status" value="1"/>
</dbReference>
<dbReference type="PROSITE" id="PS50088">
    <property type="entry name" value="ANK_REPEAT"/>
    <property type="match status" value="1"/>
</dbReference>
<dbReference type="PROSITE" id="PS50097">
    <property type="entry name" value="BTB"/>
    <property type="match status" value="1"/>
</dbReference>
<dbReference type="PROSITE" id="PS52046">
    <property type="entry name" value="ZF_C2HC_NPR"/>
    <property type="match status" value="1"/>
</dbReference>
<comment type="function">
    <text evidence="6 8 9 11">Salicylic acid (SA)-binding substrate-specific adapter of an E3 ubiquitin-protein ligase complex (CUL3-RBX1-BTB) which mediates the ubiquitination and subsequent proteasomal degradation of NPR1 in the absence of SA (PubMed:22699612, PubMed:32788727). Together with NPR3, acts as receptor of salicylic acid to monitor immunity in a NPR1-dependent manner and induce systemic acquired resistance (SAR) (PubMed:22699612, PubMed:32788727). Involved in the regulation of basal defense responses against pathogens, and may be implicated in the cross-talk between the SA- and JA-dependent signaling pathways (PubMed:15634206, PubMed:17076807, PubMed:32788727).</text>
</comment>
<comment type="pathway">
    <text evidence="9">Protein modification; protein ubiquitination.</text>
</comment>
<comment type="subunit">
    <text evidence="6 8 9 10 11">Forms homodimers, homotetramers and heterodimers with NPR3 in the presence of salicylic acid (SA) (PubMed:22699612). Interacts with TGA2, TGA3, TGA5, TGA6 and TGA7 (PubMed:15634206, PubMed:17076807). Interacts with CUL3A, a core component of the cullin-RING ubiquitin ligases (CRL) (PubMed:22699612). Binds to NPR1; this interaction is disrupted by association with SA, probably due to conformational changes (PubMed:22699612, PubMed:26269953, PubMed:32788727).</text>
</comment>
<comment type="interaction">
    <interactant intactId="EBI-1392093">
        <id>Q5ICL9</id>
    </interactant>
    <interactant intactId="EBI-4425726">
        <id>Q8VZE5</id>
        <label>At1g05410</label>
    </interactant>
    <organismsDiffer>false</organismsDiffer>
    <experiments>3</experiments>
</comment>
<comment type="interaction">
    <interactant intactId="EBI-1392093">
        <id>Q5ICL9</id>
    </interactant>
    <interactant intactId="EBI-25529516">
        <id>F4IDX2</id>
        <label>At1g12810</label>
    </interactant>
    <organismsDiffer>false</organismsDiffer>
    <experiments>3</experiments>
</comment>
<comment type="interaction">
    <interactant intactId="EBI-1392093">
        <id>Q5ICL9</id>
    </interactant>
    <interactant intactId="EBI-4412194">
        <id>Q0WLB5</id>
        <label>CHC2</label>
    </interactant>
    <organismsDiffer>false</organismsDiffer>
    <experiments>3</experiments>
</comment>
<comment type="interaction">
    <interactant intactId="EBI-1392093">
        <id>Q5ICL9</id>
    </interactant>
    <interactant intactId="EBI-4429018">
        <id>F4JRR1</id>
        <label>COG2</label>
    </interactant>
    <organismsDiffer>false</organismsDiffer>
    <experiments>3</experiments>
</comment>
<comment type="interaction">
    <interactant intactId="EBI-1392093">
        <id>Q5ICL9</id>
    </interactant>
    <interactant intactId="EBI-4424157">
        <id>Q9SCK1</id>
        <label>LSU1</label>
    </interactant>
    <organismsDiffer>false</organismsDiffer>
    <experiments>3</experiments>
</comment>
<comment type="interaction">
    <interactant intactId="EBI-1392093">
        <id>Q5ICL9</id>
    </interactant>
    <interactant intactId="EBI-4424076">
        <id>Q9FIR9</id>
        <label>LSU2</label>
    </interactant>
    <organismsDiffer>false</organismsDiffer>
    <experiments>3</experiments>
</comment>
<comment type="interaction">
    <interactant intactId="EBI-1392093">
        <id>Q5ICL9</id>
    </interactant>
    <interactant intactId="EBI-2123898">
        <id>O64471</id>
        <label>MTX1</label>
    </interactant>
    <organismsDiffer>false</organismsDiffer>
    <experiments>3</experiments>
</comment>
<comment type="interaction">
    <interactant intactId="EBI-1392093">
        <id>Q5ICL9</id>
    </interactant>
    <interactant intactId="EBI-4461284">
        <id>Q9FNH6</id>
        <label>NHL3</label>
    </interactant>
    <organismsDiffer>false</organismsDiffer>
    <experiments>3</experiments>
</comment>
<comment type="interaction">
    <interactant intactId="EBI-1392093">
        <id>Q5ICL9</id>
    </interactant>
    <interactant intactId="EBI-1392127">
        <id>P93002</id>
        <label>NPR1</label>
    </interactant>
    <organismsDiffer>false</organismsDiffer>
    <experiments>3</experiments>
</comment>
<comment type="interaction">
    <interactant intactId="EBI-1392093">
        <id>Q5ICL9</id>
    </interactant>
    <interactant intactId="EBI-4441365">
        <id>Q8L746</id>
        <label>NPR3</label>
    </interactant>
    <organismsDiffer>false</organismsDiffer>
    <experiments>5</experiments>
</comment>
<comment type="interaction">
    <interactant intactId="EBI-1392093">
        <id>Q5ICL9</id>
    </interactant>
    <interactant intactId="EBI-1392093">
        <id>Q5ICL9</id>
        <label>NPR4</label>
    </interactant>
    <organismsDiffer>false</organismsDiffer>
    <experiments>2</experiments>
</comment>
<comment type="interaction">
    <interactant intactId="EBI-1392093">
        <id>Q5ICL9</id>
    </interactant>
    <interactant intactId="EBI-25529548">
        <id>Q9FMS4</id>
        <label>SIED1</label>
    </interactant>
    <organismsDiffer>false</organismsDiffer>
    <experiments>3</experiments>
</comment>
<comment type="interaction">
    <interactant intactId="EBI-1392093">
        <id>Q5ICL9</id>
    </interactant>
    <interactant intactId="EBI-25529585">
        <id>P25269</id>
        <label>TSB2</label>
    </interactant>
    <organismsDiffer>false</organismsDiffer>
    <experiments>3</experiments>
</comment>
<comment type="subcellular location">
    <subcellularLocation>
        <location evidence="6">Nucleus</location>
    </subcellularLocation>
</comment>
<comment type="induction">
    <text evidence="6 8">Up-regulated following pathogen challenge or salicylic acid (SA) treatment, and down-regulated by methyl jasmonic acid (MeJA) treatment.</text>
</comment>
<comment type="domain">
    <text evidence="7">The BTB/POZ domain mediates the interaction with some component of ubiquitin ligase complexes.</text>
</comment>
<comment type="disruption phenotype">
    <text evidence="6 9 11">Enhanced susceptibility to the virulent bacterial pathogen Pseudomonas syringe and to the fungal pathogen Erysiphe cichoracearum (powdery mildew) (PubMed:15634206). The double mutant npr3 npr4 accumulates NPR1 proteins (while NPR1 transcripts level is normal) due to reduced NPR1 degradation by the proteasome; this leads to a reduced growth of the compatible pathogenic bacteria Pseudomonas syringae pv. maculicola ES4326 after inoculation, but impaired hypersensitive response (HR) and subsequent systemic acquired resistance (SAR) induction when infected by the avirulent strain Psm ES4326/avrRpt2 (PubMed:22699612, PubMed:32788727).</text>
</comment>
<comment type="similarity">
    <text evidence="13">Belongs to the plant 'ANKYRIN-BTB/POZ' family. 'NPR1-like' subfamily.</text>
</comment>
<comment type="sequence caution" evidence="13">
    <conflict type="erroneous gene model prediction">
        <sequence resource="EMBL-CDS" id="CAA19683"/>
    </conflict>
</comment>
<comment type="sequence caution" evidence="13">
    <conflict type="erroneous gene model prediction">
        <sequence resource="EMBL-CDS" id="CAB78968"/>
    </conflict>
</comment>
<gene>
    <name evidence="12" type="primary">NPR4</name>
    <name evidence="15" type="ordered locus">At4g19660</name>
    <name evidence="16" type="ORF">T16H5.20</name>
</gene>